<name>RS21_KLULA</name>
<feature type="chain" id="PRO_0000194758" description="Small ribosomal subunit protein eS21">
    <location>
        <begin position="1"/>
        <end position="87"/>
    </location>
</feature>
<feature type="turn" evidence="3">
    <location>
        <begin position="18"/>
        <end position="20"/>
    </location>
</feature>
<feature type="strand" evidence="3">
    <location>
        <begin position="32"/>
        <end position="39"/>
    </location>
</feature>
<feature type="strand" evidence="3">
    <location>
        <begin position="45"/>
        <end position="55"/>
    </location>
</feature>
<feature type="helix" evidence="3">
    <location>
        <begin position="57"/>
        <end position="62"/>
    </location>
</feature>
<feature type="helix" evidence="3">
    <location>
        <begin position="65"/>
        <end position="75"/>
    </location>
</feature>
<feature type="strand" evidence="3">
    <location>
        <begin position="78"/>
        <end position="81"/>
    </location>
</feature>
<proteinExistence type="evidence at protein level"/>
<organism>
    <name type="scientific">Kluyveromyces lactis (strain ATCC 8585 / CBS 2359 / DSM 70799 / NBRC 1267 / NRRL Y-1140 / WM37)</name>
    <name type="common">Yeast</name>
    <name type="synonym">Candida sphaerica</name>
    <dbReference type="NCBI Taxonomy" id="284590"/>
    <lineage>
        <taxon>Eukaryota</taxon>
        <taxon>Fungi</taxon>
        <taxon>Dikarya</taxon>
        <taxon>Ascomycota</taxon>
        <taxon>Saccharomycotina</taxon>
        <taxon>Saccharomycetes</taxon>
        <taxon>Saccharomycetales</taxon>
        <taxon>Saccharomycetaceae</taxon>
        <taxon>Kluyveromyces</taxon>
    </lineage>
</organism>
<comment type="function">
    <text evidence="1">Required for the processing of the 20S rRNA-precursor to mature 18S rRNA in a late step of the maturation of 40S ribosomal subunits. Has a physiological role leading to 18S rRNA stability (By similarity).</text>
</comment>
<comment type="subunit">
    <text>Component of the small ribosomal subunit. Mature ribosomes consist of a small (40S) and a large (60S) subunit. The 40S subunit contains about 33 different proteins and 1 molecule of RNA (18S). The 60S subunit contains about 49 different proteins and 3 molecules of RNA (25S, 5.8S and 5S).</text>
</comment>
<comment type="subcellular location">
    <subcellularLocation>
        <location evidence="1">Cytoplasm</location>
    </subcellularLocation>
</comment>
<comment type="similarity">
    <text evidence="2">Belongs to the eukaryotic ribosomal protein eS21 family.</text>
</comment>
<keyword id="KW-0002">3D-structure</keyword>
<keyword id="KW-0963">Cytoplasm</keyword>
<keyword id="KW-1185">Reference proteome</keyword>
<keyword id="KW-0687">Ribonucleoprotein</keyword>
<keyword id="KW-0689">Ribosomal protein</keyword>
<keyword id="KW-0698">rRNA processing</keyword>
<accession>Q6CXT6</accession>
<gene>
    <name type="primary">RPS21</name>
    <name type="ordered locus">KLLA0A05700g</name>
</gene>
<protein>
    <recommendedName>
        <fullName evidence="2">Small ribosomal subunit protein eS21</fullName>
    </recommendedName>
    <alternativeName>
        <fullName>40S ribosomal protein S21</fullName>
    </alternativeName>
</protein>
<reference key="1">
    <citation type="journal article" date="2004" name="Nature">
        <title>Genome evolution in yeasts.</title>
        <authorList>
            <person name="Dujon B."/>
            <person name="Sherman D."/>
            <person name="Fischer G."/>
            <person name="Durrens P."/>
            <person name="Casaregola S."/>
            <person name="Lafontaine I."/>
            <person name="de Montigny J."/>
            <person name="Marck C."/>
            <person name="Neuveglise C."/>
            <person name="Talla E."/>
            <person name="Goffard N."/>
            <person name="Frangeul L."/>
            <person name="Aigle M."/>
            <person name="Anthouard V."/>
            <person name="Babour A."/>
            <person name="Barbe V."/>
            <person name="Barnay S."/>
            <person name="Blanchin S."/>
            <person name="Beckerich J.-M."/>
            <person name="Beyne E."/>
            <person name="Bleykasten C."/>
            <person name="Boisrame A."/>
            <person name="Boyer J."/>
            <person name="Cattolico L."/>
            <person name="Confanioleri F."/>
            <person name="de Daruvar A."/>
            <person name="Despons L."/>
            <person name="Fabre E."/>
            <person name="Fairhead C."/>
            <person name="Ferry-Dumazet H."/>
            <person name="Groppi A."/>
            <person name="Hantraye F."/>
            <person name="Hennequin C."/>
            <person name="Jauniaux N."/>
            <person name="Joyet P."/>
            <person name="Kachouri R."/>
            <person name="Kerrest A."/>
            <person name="Koszul R."/>
            <person name="Lemaire M."/>
            <person name="Lesur I."/>
            <person name="Ma L."/>
            <person name="Muller H."/>
            <person name="Nicaud J.-M."/>
            <person name="Nikolski M."/>
            <person name="Oztas S."/>
            <person name="Ozier-Kalogeropoulos O."/>
            <person name="Pellenz S."/>
            <person name="Potier S."/>
            <person name="Richard G.-F."/>
            <person name="Straub M.-L."/>
            <person name="Suleau A."/>
            <person name="Swennen D."/>
            <person name="Tekaia F."/>
            <person name="Wesolowski-Louvel M."/>
            <person name="Westhof E."/>
            <person name="Wirth B."/>
            <person name="Zeniou-Meyer M."/>
            <person name="Zivanovic Y."/>
            <person name="Bolotin-Fukuhara M."/>
            <person name="Thierry A."/>
            <person name="Bouchier C."/>
            <person name="Caudron B."/>
            <person name="Scarpelli C."/>
            <person name="Gaillardin C."/>
            <person name="Weissenbach J."/>
            <person name="Wincker P."/>
            <person name="Souciet J.-L."/>
        </authorList>
    </citation>
    <scope>NUCLEOTIDE SEQUENCE [LARGE SCALE GENOMIC DNA]</scope>
    <source>
        <strain>ATCC 8585 / CBS 2359 / DSM 70799 / NBRC 1267 / NRRL Y-1140 / WM37</strain>
    </source>
</reference>
<evidence type="ECO:0000250" key="1"/>
<evidence type="ECO:0000305" key="2"/>
<evidence type="ECO:0007829" key="3">
    <source>
        <dbReference type="PDB" id="8RW1"/>
    </source>
</evidence>
<sequence>MENDKGQLVELYVPRKCSATNRIIKAKDHSSVQINIAQVDEEGRAIPGEYVTYALSGYIRARGEADDSLNRLAQQDGLLKNVWSYSR</sequence>
<dbReference type="EMBL" id="CR382121">
    <property type="protein sequence ID" value="CAH02841.1"/>
    <property type="molecule type" value="Genomic_DNA"/>
</dbReference>
<dbReference type="RefSeq" id="XP_451253.1">
    <property type="nucleotide sequence ID" value="XM_451253.1"/>
</dbReference>
<dbReference type="PDB" id="3J80">
    <property type="method" value="EM"/>
    <property type="resolution" value="3.75 A"/>
    <property type="chains" value="V=1-87"/>
</dbReference>
<dbReference type="PDB" id="3J81">
    <property type="method" value="EM"/>
    <property type="resolution" value="4.00 A"/>
    <property type="chains" value="V=1-87"/>
</dbReference>
<dbReference type="PDB" id="3JAM">
    <property type="method" value="EM"/>
    <property type="resolution" value="3.46 A"/>
    <property type="chains" value="V=1-87"/>
</dbReference>
<dbReference type="PDB" id="3JAP">
    <property type="method" value="EM"/>
    <property type="resolution" value="4.90 A"/>
    <property type="chains" value="V=1-87"/>
</dbReference>
<dbReference type="PDB" id="5IT7">
    <property type="method" value="EM"/>
    <property type="resolution" value="3.60 A"/>
    <property type="chains" value="V=1-87"/>
</dbReference>
<dbReference type="PDB" id="5IT9">
    <property type="method" value="EM"/>
    <property type="resolution" value="3.80 A"/>
    <property type="chains" value="V=1-87"/>
</dbReference>
<dbReference type="PDB" id="6FYX">
    <property type="method" value="EM"/>
    <property type="resolution" value="3.05 A"/>
    <property type="chains" value="V=1-87"/>
</dbReference>
<dbReference type="PDB" id="6FYY">
    <property type="method" value="EM"/>
    <property type="resolution" value="3.05 A"/>
    <property type="chains" value="V=1-87"/>
</dbReference>
<dbReference type="PDB" id="6GSM">
    <property type="method" value="EM"/>
    <property type="resolution" value="5.15 A"/>
    <property type="chains" value="V=1-87"/>
</dbReference>
<dbReference type="PDB" id="6GSN">
    <property type="method" value="EM"/>
    <property type="resolution" value="5.75 A"/>
    <property type="chains" value="V=1-87"/>
</dbReference>
<dbReference type="PDB" id="6UZ7">
    <property type="method" value="EM"/>
    <property type="resolution" value="3.60 A"/>
    <property type="chains" value="V=1-87"/>
</dbReference>
<dbReference type="PDB" id="8I7J">
    <property type="method" value="EM"/>
    <property type="resolution" value="4.60 A"/>
    <property type="chains" value="V=1-87"/>
</dbReference>
<dbReference type="PDB" id="8RW1">
    <property type="method" value="EM"/>
    <property type="resolution" value="3.35 A"/>
    <property type="chains" value="V=1-87"/>
</dbReference>
<dbReference type="PDB" id="8S8D">
    <property type="method" value="EM"/>
    <property type="resolution" value="3.45 A"/>
    <property type="chains" value="V=1-87"/>
</dbReference>
<dbReference type="PDB" id="8S8E">
    <property type="method" value="EM"/>
    <property type="resolution" value="3.85 A"/>
    <property type="chains" value="V=1-87"/>
</dbReference>
<dbReference type="PDB" id="8S8F">
    <property type="method" value="EM"/>
    <property type="resolution" value="3.95 A"/>
    <property type="chains" value="V=1-87"/>
</dbReference>
<dbReference type="PDB" id="8S8G">
    <property type="method" value="EM"/>
    <property type="resolution" value="4.00 A"/>
    <property type="chains" value="V=1-87"/>
</dbReference>
<dbReference type="PDB" id="8S8H">
    <property type="method" value="EM"/>
    <property type="resolution" value="4.00 A"/>
    <property type="chains" value="V=1-87"/>
</dbReference>
<dbReference type="PDB" id="8S8I">
    <property type="method" value="EM"/>
    <property type="resolution" value="4.30 A"/>
    <property type="chains" value="V=1-87"/>
</dbReference>
<dbReference type="PDB" id="8S8J">
    <property type="method" value="EM"/>
    <property type="resolution" value="4.70 A"/>
    <property type="chains" value="V=1-87"/>
</dbReference>
<dbReference type="PDB" id="8S8K">
    <property type="method" value="EM"/>
    <property type="resolution" value="4.00 A"/>
    <property type="chains" value="V=1-87"/>
</dbReference>
<dbReference type="PDBsum" id="3J80"/>
<dbReference type="PDBsum" id="3J81"/>
<dbReference type="PDBsum" id="3JAM"/>
<dbReference type="PDBsum" id="3JAP"/>
<dbReference type="PDBsum" id="5IT7"/>
<dbReference type="PDBsum" id="5IT9"/>
<dbReference type="PDBsum" id="6FYX"/>
<dbReference type="PDBsum" id="6FYY"/>
<dbReference type="PDBsum" id="6GSM"/>
<dbReference type="PDBsum" id="6GSN"/>
<dbReference type="PDBsum" id="6UZ7"/>
<dbReference type="PDBsum" id="8I7J"/>
<dbReference type="PDBsum" id="8RW1"/>
<dbReference type="PDBsum" id="8S8D"/>
<dbReference type="PDBsum" id="8S8E"/>
<dbReference type="PDBsum" id="8S8F"/>
<dbReference type="PDBsum" id="8S8G"/>
<dbReference type="PDBsum" id="8S8H"/>
<dbReference type="PDBsum" id="8S8I"/>
<dbReference type="PDBsum" id="8S8J"/>
<dbReference type="PDBsum" id="8S8K"/>
<dbReference type="EMDB" id="EMD-0057"/>
<dbReference type="EMDB" id="EMD-0058"/>
<dbReference type="EMDB" id="EMD-19541"/>
<dbReference type="EMDB" id="EMD-19801"/>
<dbReference type="EMDB" id="EMD-19802"/>
<dbReference type="EMDB" id="EMD-19803"/>
<dbReference type="EMDB" id="EMD-19804"/>
<dbReference type="EMDB" id="EMD-19805"/>
<dbReference type="EMDB" id="EMD-19806"/>
<dbReference type="EMDB" id="EMD-19807"/>
<dbReference type="EMDB" id="EMD-19808"/>
<dbReference type="EMDB" id="EMD-20952"/>
<dbReference type="EMDB" id="EMD-35216"/>
<dbReference type="EMDB" id="EMD-4327"/>
<dbReference type="EMDB" id="EMD-4328"/>
<dbReference type="EMDB" id="EMD-8123"/>
<dbReference type="EMDB" id="EMD-8124"/>
<dbReference type="SMR" id="Q6CXT6"/>
<dbReference type="FunCoup" id="Q6CXT6">
    <property type="interactions" value="1010"/>
</dbReference>
<dbReference type="STRING" id="284590.Q6CXT6"/>
<dbReference type="PaxDb" id="284590-Q6CXT6"/>
<dbReference type="KEGG" id="kla:KLLA0_A05700g"/>
<dbReference type="eggNOG" id="KOG3486">
    <property type="taxonomic scope" value="Eukaryota"/>
</dbReference>
<dbReference type="HOGENOM" id="CLU_167122_2_0_1"/>
<dbReference type="InParanoid" id="Q6CXT6"/>
<dbReference type="OMA" id="GESDACM"/>
<dbReference type="EvolutionaryTrace" id="Q6CXT6"/>
<dbReference type="Proteomes" id="UP000000598">
    <property type="component" value="Chromosome A"/>
</dbReference>
<dbReference type="GO" id="GO:0005737">
    <property type="term" value="C:cytoplasm"/>
    <property type="evidence" value="ECO:0007669"/>
    <property type="project" value="UniProtKB-SubCell"/>
</dbReference>
<dbReference type="GO" id="GO:1990904">
    <property type="term" value="C:ribonucleoprotein complex"/>
    <property type="evidence" value="ECO:0007669"/>
    <property type="project" value="UniProtKB-KW"/>
</dbReference>
<dbReference type="GO" id="GO:0005840">
    <property type="term" value="C:ribosome"/>
    <property type="evidence" value="ECO:0007669"/>
    <property type="project" value="UniProtKB-KW"/>
</dbReference>
<dbReference type="GO" id="GO:0003735">
    <property type="term" value="F:structural constituent of ribosome"/>
    <property type="evidence" value="ECO:0007669"/>
    <property type="project" value="InterPro"/>
</dbReference>
<dbReference type="GO" id="GO:0006364">
    <property type="term" value="P:rRNA processing"/>
    <property type="evidence" value="ECO:0007669"/>
    <property type="project" value="UniProtKB-KW"/>
</dbReference>
<dbReference type="GO" id="GO:0006412">
    <property type="term" value="P:translation"/>
    <property type="evidence" value="ECO:0007669"/>
    <property type="project" value="InterPro"/>
</dbReference>
<dbReference type="FunFam" id="3.30.1230.20:FF:000001">
    <property type="entry name" value="40S ribosomal protein S21"/>
    <property type="match status" value="1"/>
</dbReference>
<dbReference type="Gene3D" id="3.30.1230.20">
    <property type="match status" value="1"/>
</dbReference>
<dbReference type="InterPro" id="IPR001931">
    <property type="entry name" value="Ribosomal_eS21"/>
</dbReference>
<dbReference type="InterPro" id="IPR018279">
    <property type="entry name" value="Ribosomal_eS21_CS"/>
</dbReference>
<dbReference type="InterPro" id="IPR038579">
    <property type="entry name" value="Ribosomal_eS21_sf"/>
</dbReference>
<dbReference type="PANTHER" id="PTHR10442">
    <property type="entry name" value="40S RIBOSOMAL PROTEIN S21"/>
    <property type="match status" value="1"/>
</dbReference>
<dbReference type="Pfam" id="PF01249">
    <property type="entry name" value="Ribosomal_S21e"/>
    <property type="match status" value="1"/>
</dbReference>
<dbReference type="PIRSF" id="PIRSF002148">
    <property type="entry name" value="Ribosomal_S21e"/>
    <property type="match status" value="1"/>
</dbReference>
<dbReference type="PROSITE" id="PS00996">
    <property type="entry name" value="RIBOSOMAL_S21E"/>
    <property type="match status" value="1"/>
</dbReference>